<evidence type="ECO:0000255" key="1">
    <source>
        <dbReference type="HAMAP-Rule" id="MF_00209"/>
    </source>
</evidence>
<comment type="function">
    <text evidence="1">Catalyzes the hydrolysis of inorganic pyrophosphate (PPi) forming two phosphate ions.</text>
</comment>
<comment type="catalytic activity">
    <reaction evidence="1">
        <text>diphosphate + H2O = 2 phosphate + H(+)</text>
        <dbReference type="Rhea" id="RHEA:24576"/>
        <dbReference type="ChEBI" id="CHEBI:15377"/>
        <dbReference type="ChEBI" id="CHEBI:15378"/>
        <dbReference type="ChEBI" id="CHEBI:33019"/>
        <dbReference type="ChEBI" id="CHEBI:43474"/>
        <dbReference type="EC" id="3.6.1.1"/>
    </reaction>
</comment>
<comment type="cofactor">
    <cofactor evidence="1">
        <name>Mg(2+)</name>
        <dbReference type="ChEBI" id="CHEBI:18420"/>
    </cofactor>
</comment>
<comment type="subunit">
    <text evidence="1">Homohexamer.</text>
</comment>
<comment type="subcellular location">
    <subcellularLocation>
        <location evidence="1">Cytoplasm</location>
    </subcellularLocation>
</comment>
<comment type="similarity">
    <text evidence="1">Belongs to the PPase family.</text>
</comment>
<dbReference type="EC" id="3.6.1.1" evidence="1"/>
<dbReference type="EMBL" id="AP006878">
    <property type="protein sequence ID" value="BAD85889.1"/>
    <property type="molecule type" value="Genomic_DNA"/>
</dbReference>
<dbReference type="RefSeq" id="WP_011250651.1">
    <property type="nucleotide sequence ID" value="NC_006624.1"/>
</dbReference>
<dbReference type="SMR" id="Q5JIY3"/>
<dbReference type="STRING" id="69014.TK1700"/>
<dbReference type="EnsemblBacteria" id="BAD85889">
    <property type="protein sequence ID" value="BAD85889"/>
    <property type="gene ID" value="TK1700"/>
</dbReference>
<dbReference type="GeneID" id="78448229"/>
<dbReference type="KEGG" id="tko:TK1700"/>
<dbReference type="PATRIC" id="fig|69014.16.peg.1658"/>
<dbReference type="eggNOG" id="arCOG01711">
    <property type="taxonomic scope" value="Archaea"/>
</dbReference>
<dbReference type="HOGENOM" id="CLU_073198_1_2_2"/>
<dbReference type="InParanoid" id="Q5JIY3"/>
<dbReference type="OrthoDB" id="134160at2157"/>
<dbReference type="PhylomeDB" id="Q5JIY3"/>
<dbReference type="Proteomes" id="UP000000536">
    <property type="component" value="Chromosome"/>
</dbReference>
<dbReference type="GO" id="GO:0005737">
    <property type="term" value="C:cytoplasm"/>
    <property type="evidence" value="ECO:0007669"/>
    <property type="project" value="UniProtKB-SubCell"/>
</dbReference>
<dbReference type="GO" id="GO:0004427">
    <property type="term" value="F:inorganic diphosphate phosphatase activity"/>
    <property type="evidence" value="ECO:0000318"/>
    <property type="project" value="GO_Central"/>
</dbReference>
<dbReference type="GO" id="GO:0000287">
    <property type="term" value="F:magnesium ion binding"/>
    <property type="evidence" value="ECO:0007669"/>
    <property type="project" value="UniProtKB-UniRule"/>
</dbReference>
<dbReference type="GO" id="GO:0006796">
    <property type="term" value="P:phosphate-containing compound metabolic process"/>
    <property type="evidence" value="ECO:0000318"/>
    <property type="project" value="GO_Central"/>
</dbReference>
<dbReference type="CDD" id="cd00412">
    <property type="entry name" value="pyrophosphatase"/>
    <property type="match status" value="1"/>
</dbReference>
<dbReference type="FunFam" id="3.90.80.10:FF:000003">
    <property type="entry name" value="Inorganic pyrophosphatase"/>
    <property type="match status" value="1"/>
</dbReference>
<dbReference type="Gene3D" id="3.90.80.10">
    <property type="entry name" value="Inorganic pyrophosphatase"/>
    <property type="match status" value="1"/>
</dbReference>
<dbReference type="HAMAP" id="MF_00209">
    <property type="entry name" value="Inorganic_PPase"/>
    <property type="match status" value="1"/>
</dbReference>
<dbReference type="InterPro" id="IPR008162">
    <property type="entry name" value="Pyrophosphatase"/>
</dbReference>
<dbReference type="InterPro" id="IPR036649">
    <property type="entry name" value="Pyrophosphatase_sf"/>
</dbReference>
<dbReference type="PANTHER" id="PTHR10286">
    <property type="entry name" value="INORGANIC PYROPHOSPHATASE"/>
    <property type="match status" value="1"/>
</dbReference>
<dbReference type="Pfam" id="PF00719">
    <property type="entry name" value="Pyrophosphatase"/>
    <property type="match status" value="1"/>
</dbReference>
<dbReference type="SUPFAM" id="SSF50324">
    <property type="entry name" value="Inorganic pyrophosphatase"/>
    <property type="match status" value="1"/>
</dbReference>
<dbReference type="PROSITE" id="PS00387">
    <property type="entry name" value="PPASE"/>
    <property type="match status" value="1"/>
</dbReference>
<name>IPYR_THEKO</name>
<feature type="chain" id="PRO_0000137558" description="Inorganic pyrophosphatase">
    <location>
        <begin position="1"/>
        <end position="178"/>
    </location>
</feature>
<feature type="binding site" evidence="1">
    <location>
        <position position="30"/>
    </location>
    <ligand>
        <name>substrate</name>
    </ligand>
</feature>
<feature type="binding site" evidence="1">
    <location>
        <position position="44"/>
    </location>
    <ligand>
        <name>substrate</name>
    </ligand>
</feature>
<feature type="binding site" evidence="1">
    <location>
        <position position="56"/>
    </location>
    <ligand>
        <name>substrate</name>
    </ligand>
</feature>
<feature type="binding site" evidence="1">
    <location>
        <position position="66"/>
    </location>
    <ligand>
        <name>Mg(2+)</name>
        <dbReference type="ChEBI" id="CHEBI:18420"/>
        <label>1</label>
    </ligand>
</feature>
<feature type="binding site" evidence="1">
    <location>
        <position position="71"/>
    </location>
    <ligand>
        <name>Mg(2+)</name>
        <dbReference type="ChEBI" id="CHEBI:18420"/>
        <label>1</label>
    </ligand>
</feature>
<feature type="binding site" evidence="1">
    <location>
        <position position="71"/>
    </location>
    <ligand>
        <name>Mg(2+)</name>
        <dbReference type="ChEBI" id="CHEBI:18420"/>
        <label>2</label>
    </ligand>
</feature>
<feature type="binding site" evidence="1">
    <location>
        <position position="103"/>
    </location>
    <ligand>
        <name>Mg(2+)</name>
        <dbReference type="ChEBI" id="CHEBI:18420"/>
        <label>1</label>
    </ligand>
</feature>
<feature type="binding site" evidence="1">
    <location>
        <position position="140"/>
    </location>
    <ligand>
        <name>substrate</name>
    </ligand>
</feature>
<proteinExistence type="inferred from homology"/>
<keyword id="KW-0963">Cytoplasm</keyword>
<keyword id="KW-0378">Hydrolase</keyword>
<keyword id="KW-0460">Magnesium</keyword>
<keyword id="KW-0479">Metal-binding</keyword>
<keyword id="KW-1185">Reference proteome</keyword>
<gene>
    <name evidence="1" type="primary">ppa</name>
    <name type="ordered locus">TK1700</name>
</gene>
<organism>
    <name type="scientific">Thermococcus kodakarensis (strain ATCC BAA-918 / JCM 12380 / KOD1)</name>
    <name type="common">Pyrococcus kodakaraensis (strain KOD1)</name>
    <dbReference type="NCBI Taxonomy" id="69014"/>
    <lineage>
        <taxon>Archaea</taxon>
        <taxon>Methanobacteriati</taxon>
        <taxon>Methanobacteriota</taxon>
        <taxon>Thermococci</taxon>
        <taxon>Thermococcales</taxon>
        <taxon>Thermococcaceae</taxon>
        <taxon>Thermococcus</taxon>
    </lineage>
</organism>
<protein>
    <recommendedName>
        <fullName evidence="1">Inorganic pyrophosphatase</fullName>
        <ecNumber evidence="1">3.6.1.1</ecNumber>
    </recommendedName>
    <alternativeName>
        <fullName evidence="1">Pyrophosphate phospho-hydrolase</fullName>
        <shortName evidence="1">PPase</shortName>
    </alternativeName>
</protein>
<sequence>MNPFHELEPGPEVPEVVYALIEIPKGSRNKYELDKKTGLLKLDRVLYSPFFYPVDYGIIPQTWYDDGDPFDIMVIMREPVYPLTIVEARPIGIMKMEDSGDKDWKVLAVPVEDPYFKDWKDIDDVPKAFLDEIAHFFQRYKELQGKTTTVEGWGNAEEAKKEILRAIELYKEKFGKKE</sequence>
<reference key="1">
    <citation type="journal article" date="2005" name="Genome Res.">
        <title>Complete genome sequence of the hyperthermophilic archaeon Thermococcus kodakaraensis KOD1 and comparison with Pyrococcus genomes.</title>
        <authorList>
            <person name="Fukui T."/>
            <person name="Atomi H."/>
            <person name="Kanai T."/>
            <person name="Matsumi R."/>
            <person name="Fujiwara S."/>
            <person name="Imanaka T."/>
        </authorList>
    </citation>
    <scope>NUCLEOTIDE SEQUENCE [LARGE SCALE GENOMIC DNA]</scope>
    <source>
        <strain>ATCC BAA-918 / JCM 12380 / KOD1</strain>
    </source>
</reference>
<accession>Q5JIY3</accession>